<accession>P56117</accession>
<keyword id="KW-1003">Cell membrane</keyword>
<keyword id="KW-0472">Membrane</keyword>
<keyword id="KW-1185">Reference proteome</keyword>
<keyword id="KW-0677">Repeat</keyword>
<keyword id="KW-0808">Transferase</keyword>
<keyword id="KW-0812">Transmembrane</keyword>
<keyword id="KW-1133">Transmembrane helix</keyword>
<feature type="chain" id="PRO_0000201290" description="Uncharacterized protein HP_0190">
    <location>
        <begin position="1"/>
        <end position="502"/>
    </location>
</feature>
<feature type="transmembrane region" description="Helical" evidence="1">
    <location>
        <begin position="1"/>
        <end position="21"/>
    </location>
</feature>
<feature type="domain" description="PLD phosphodiesterase 1" evidence="2">
    <location>
        <begin position="162"/>
        <end position="189"/>
    </location>
</feature>
<feature type="domain" description="PLD phosphodiesterase 2" evidence="2">
    <location>
        <begin position="396"/>
        <end position="423"/>
    </location>
</feature>
<reference key="1">
    <citation type="journal article" date="1997" name="Nature">
        <title>The complete genome sequence of the gastric pathogen Helicobacter pylori.</title>
        <authorList>
            <person name="Tomb J.-F."/>
            <person name="White O."/>
            <person name="Kerlavage A.R."/>
            <person name="Clayton R.A."/>
            <person name="Sutton G.G."/>
            <person name="Fleischmann R.D."/>
            <person name="Ketchum K.A."/>
            <person name="Klenk H.-P."/>
            <person name="Gill S.R."/>
            <person name="Dougherty B.A."/>
            <person name="Nelson K.E."/>
            <person name="Quackenbush J."/>
            <person name="Zhou L."/>
            <person name="Kirkness E.F."/>
            <person name="Peterson S.N."/>
            <person name="Loftus B.J."/>
            <person name="Richardson D.L."/>
            <person name="Dodson R.J."/>
            <person name="Khalak H.G."/>
            <person name="Glodek A."/>
            <person name="McKenney K."/>
            <person name="FitzGerald L.M."/>
            <person name="Lee N."/>
            <person name="Adams M.D."/>
            <person name="Hickey E.K."/>
            <person name="Berg D.E."/>
            <person name="Gocayne J.D."/>
            <person name="Utterback T.R."/>
            <person name="Peterson J.D."/>
            <person name="Kelley J.M."/>
            <person name="Cotton M.D."/>
            <person name="Weidman J.F."/>
            <person name="Fujii C."/>
            <person name="Bowman C."/>
            <person name="Watthey L."/>
            <person name="Wallin E."/>
            <person name="Hayes W.S."/>
            <person name="Borodovsky M."/>
            <person name="Karp P.D."/>
            <person name="Smith H.O."/>
            <person name="Fraser C.M."/>
            <person name="Venter J.C."/>
        </authorList>
    </citation>
    <scope>NUCLEOTIDE SEQUENCE [LARGE SCALE GENOMIC DNA]</scope>
    <source>
        <strain>ATCC 700392 / 26695</strain>
    </source>
</reference>
<protein>
    <recommendedName>
        <fullName>Uncharacterized protein HP_0190</fullName>
    </recommendedName>
</protein>
<evidence type="ECO:0000255" key="1"/>
<evidence type="ECO:0000255" key="2">
    <source>
        <dbReference type="PROSITE-ProRule" id="PRU00153"/>
    </source>
</evidence>
<evidence type="ECO:0000305" key="3"/>
<comment type="subcellular location">
    <subcellularLocation>
        <location evidence="3">Cell membrane</location>
        <topology evidence="3">Single-pass membrane protein</topology>
    </subcellularLocation>
</comment>
<comment type="similarity">
    <text evidence="3">Belongs to the phospholipase D family. Cardiolipin synthase subfamily.</text>
</comment>
<proteinExistence type="inferred from homology"/>
<dbReference type="EMBL" id="AE000511">
    <property type="protein sequence ID" value="AAD07257.1"/>
    <property type="molecule type" value="Genomic_DNA"/>
</dbReference>
<dbReference type="PIR" id="F64543">
    <property type="entry name" value="F64543"/>
</dbReference>
<dbReference type="RefSeq" id="NP_206989.1">
    <property type="nucleotide sequence ID" value="NC_000915.1"/>
</dbReference>
<dbReference type="FunCoup" id="P56117">
    <property type="interactions" value="15"/>
</dbReference>
<dbReference type="STRING" id="85962.HP_0190"/>
<dbReference type="PaxDb" id="85962-C694_00945"/>
<dbReference type="EnsemblBacteria" id="AAD07257">
    <property type="protein sequence ID" value="AAD07257"/>
    <property type="gene ID" value="HP_0190"/>
</dbReference>
<dbReference type="KEGG" id="heo:C694_00945"/>
<dbReference type="KEGG" id="hpy:HP_0190"/>
<dbReference type="PATRIC" id="fig|85962.47.peg.205"/>
<dbReference type="eggNOG" id="COG1502">
    <property type="taxonomic scope" value="Bacteria"/>
</dbReference>
<dbReference type="InParanoid" id="P56117"/>
<dbReference type="OrthoDB" id="9762009at2"/>
<dbReference type="PhylomeDB" id="P56117"/>
<dbReference type="Proteomes" id="UP000000429">
    <property type="component" value="Chromosome"/>
</dbReference>
<dbReference type="GO" id="GO:0005886">
    <property type="term" value="C:plasma membrane"/>
    <property type="evidence" value="ECO:0007669"/>
    <property type="project" value="UniProtKB-SubCell"/>
</dbReference>
<dbReference type="GO" id="GO:0030572">
    <property type="term" value="F:phosphatidyltransferase activity"/>
    <property type="evidence" value="ECO:0007669"/>
    <property type="project" value="UniProtKB-ARBA"/>
</dbReference>
<dbReference type="GO" id="GO:0032049">
    <property type="term" value="P:cardiolipin biosynthetic process"/>
    <property type="evidence" value="ECO:0000318"/>
    <property type="project" value="GO_Central"/>
</dbReference>
<dbReference type="CDD" id="cd09111">
    <property type="entry name" value="PLDc_ymdC_like_1"/>
    <property type="match status" value="1"/>
</dbReference>
<dbReference type="CDD" id="cd09113">
    <property type="entry name" value="PLDc_ymdC_like_2"/>
    <property type="match status" value="1"/>
</dbReference>
<dbReference type="FunFam" id="3.30.870.10:FF:000070">
    <property type="entry name" value="Phospholipase D family protein"/>
    <property type="match status" value="1"/>
</dbReference>
<dbReference type="FunFam" id="3.30.870.10:FF:000074">
    <property type="entry name" value="Phospholipase D family protein"/>
    <property type="match status" value="1"/>
</dbReference>
<dbReference type="Gene3D" id="3.30.870.10">
    <property type="entry name" value="Endonuclease Chain A"/>
    <property type="match status" value="2"/>
</dbReference>
<dbReference type="InterPro" id="IPR025202">
    <property type="entry name" value="PLD-like_dom"/>
</dbReference>
<dbReference type="InterPro" id="IPR001736">
    <property type="entry name" value="PLipase_D/transphosphatidylase"/>
</dbReference>
<dbReference type="PANTHER" id="PTHR21248">
    <property type="entry name" value="CARDIOLIPIN SYNTHASE"/>
    <property type="match status" value="1"/>
</dbReference>
<dbReference type="PANTHER" id="PTHR21248:SF12">
    <property type="entry name" value="CARDIOLIPIN SYNTHASE C"/>
    <property type="match status" value="1"/>
</dbReference>
<dbReference type="Pfam" id="PF13091">
    <property type="entry name" value="PLDc_2"/>
    <property type="match status" value="2"/>
</dbReference>
<dbReference type="SMART" id="SM00155">
    <property type="entry name" value="PLDc"/>
    <property type="match status" value="2"/>
</dbReference>
<dbReference type="SUPFAM" id="SSF56024">
    <property type="entry name" value="Phospholipase D/nuclease"/>
    <property type="match status" value="2"/>
</dbReference>
<dbReference type="PROSITE" id="PS50035">
    <property type="entry name" value="PLD"/>
    <property type="match status" value="2"/>
</dbReference>
<organism>
    <name type="scientific">Helicobacter pylori (strain ATCC 700392 / 26695)</name>
    <name type="common">Campylobacter pylori</name>
    <dbReference type="NCBI Taxonomy" id="85962"/>
    <lineage>
        <taxon>Bacteria</taxon>
        <taxon>Pseudomonadati</taxon>
        <taxon>Campylobacterota</taxon>
        <taxon>Epsilonproteobacteria</taxon>
        <taxon>Campylobacterales</taxon>
        <taxon>Helicobacteraceae</taxon>
        <taxon>Helicobacter</taxon>
    </lineage>
</organism>
<sequence length="502" mass="58287">MKIFLVFLSVFFFNGCFGLVYKTPISSSPISYDPYTTPIGSLYAEKLKENPNHSAAILLEDGFDALLHRVGLIRMSQKSIDMQTYIYKNDLSSQVIAKELLNAANRGVKVRILLDDNGLDSDFSDIMLLNFHKNIEVKIFNPYYIRNKGLRYFEMLADYERIKKRMHNKLFIVDNFAVIIGGRNIGDNYFDNDLDTNFLDLDALFFGGVASKAKESFERYWRFHRSIPVSLLRTHKRLKNNAKEIAKLHEKIPISAEDKNQFEKKVNDFIDRFQKYQYPIYYGNAIFLADSPKKIDTPLYSPIKIAFEKALKNAKDSVFIASSYFIPGKKMMKIFKNQISKGIELNILTNSLSSTDAIVVYGAWERYRNQLVRMGANVYEIRNDFFNRQIKGRFSTKHSLHGKTIVFDDNLTLLGSFNIDPRSAYINTESAVLFDNPSFAKRVRLSLKDHAQQSWHLVVYRHRVIWEAVEEGILIHEKTSPDTSFFLRLIKEWSKVLPEREL</sequence>
<gene>
    <name type="ordered locus">HP_0190</name>
</gene>
<name>Y190_HELPY</name>